<dbReference type="EC" id="1.1.1.86" evidence="1"/>
<dbReference type="EMBL" id="AE017262">
    <property type="protein sequence ID" value="AAT04779.1"/>
    <property type="molecule type" value="Genomic_DNA"/>
</dbReference>
<dbReference type="RefSeq" id="WP_003727977.1">
    <property type="nucleotide sequence ID" value="NC_002973.6"/>
</dbReference>
<dbReference type="SMR" id="Q71Y36"/>
<dbReference type="GeneID" id="93235432"/>
<dbReference type="KEGG" id="lmf:LMOf2365_2009"/>
<dbReference type="HOGENOM" id="CLU_033821_0_1_9"/>
<dbReference type="UniPathway" id="UPA00047">
    <property type="reaction ID" value="UER00056"/>
</dbReference>
<dbReference type="UniPathway" id="UPA00049">
    <property type="reaction ID" value="UER00060"/>
</dbReference>
<dbReference type="GO" id="GO:0005829">
    <property type="term" value="C:cytosol"/>
    <property type="evidence" value="ECO:0007669"/>
    <property type="project" value="TreeGrafter"/>
</dbReference>
<dbReference type="GO" id="GO:0004455">
    <property type="term" value="F:ketol-acid reductoisomerase activity"/>
    <property type="evidence" value="ECO:0007669"/>
    <property type="project" value="UniProtKB-UniRule"/>
</dbReference>
<dbReference type="GO" id="GO:0000287">
    <property type="term" value="F:magnesium ion binding"/>
    <property type="evidence" value="ECO:0007669"/>
    <property type="project" value="UniProtKB-UniRule"/>
</dbReference>
<dbReference type="GO" id="GO:0050661">
    <property type="term" value="F:NADP binding"/>
    <property type="evidence" value="ECO:0007669"/>
    <property type="project" value="InterPro"/>
</dbReference>
<dbReference type="GO" id="GO:0009097">
    <property type="term" value="P:isoleucine biosynthetic process"/>
    <property type="evidence" value="ECO:0007669"/>
    <property type="project" value="UniProtKB-UniRule"/>
</dbReference>
<dbReference type="GO" id="GO:0009099">
    <property type="term" value="P:L-valine biosynthetic process"/>
    <property type="evidence" value="ECO:0007669"/>
    <property type="project" value="UniProtKB-UniRule"/>
</dbReference>
<dbReference type="FunFam" id="3.40.50.720:FF:000023">
    <property type="entry name" value="Ketol-acid reductoisomerase (NADP(+))"/>
    <property type="match status" value="1"/>
</dbReference>
<dbReference type="Gene3D" id="6.10.240.10">
    <property type="match status" value="1"/>
</dbReference>
<dbReference type="Gene3D" id="3.40.50.720">
    <property type="entry name" value="NAD(P)-binding Rossmann-like Domain"/>
    <property type="match status" value="1"/>
</dbReference>
<dbReference type="HAMAP" id="MF_00435">
    <property type="entry name" value="IlvC"/>
    <property type="match status" value="1"/>
</dbReference>
<dbReference type="InterPro" id="IPR008927">
    <property type="entry name" value="6-PGluconate_DH-like_C_sf"/>
</dbReference>
<dbReference type="InterPro" id="IPR013023">
    <property type="entry name" value="KARI"/>
</dbReference>
<dbReference type="InterPro" id="IPR000506">
    <property type="entry name" value="KARI_C"/>
</dbReference>
<dbReference type="InterPro" id="IPR013116">
    <property type="entry name" value="KARI_N"/>
</dbReference>
<dbReference type="InterPro" id="IPR014359">
    <property type="entry name" value="KARI_prok"/>
</dbReference>
<dbReference type="InterPro" id="IPR036291">
    <property type="entry name" value="NAD(P)-bd_dom_sf"/>
</dbReference>
<dbReference type="NCBIfam" id="TIGR00465">
    <property type="entry name" value="ilvC"/>
    <property type="match status" value="1"/>
</dbReference>
<dbReference type="NCBIfam" id="NF004017">
    <property type="entry name" value="PRK05479.1"/>
    <property type="match status" value="1"/>
</dbReference>
<dbReference type="NCBIfam" id="NF009940">
    <property type="entry name" value="PRK13403.1"/>
    <property type="match status" value="1"/>
</dbReference>
<dbReference type="PANTHER" id="PTHR21371">
    <property type="entry name" value="KETOL-ACID REDUCTOISOMERASE, MITOCHONDRIAL"/>
    <property type="match status" value="1"/>
</dbReference>
<dbReference type="PANTHER" id="PTHR21371:SF1">
    <property type="entry name" value="KETOL-ACID REDUCTOISOMERASE, MITOCHONDRIAL"/>
    <property type="match status" value="1"/>
</dbReference>
<dbReference type="Pfam" id="PF01450">
    <property type="entry name" value="KARI_C"/>
    <property type="match status" value="1"/>
</dbReference>
<dbReference type="Pfam" id="PF07991">
    <property type="entry name" value="KARI_N"/>
    <property type="match status" value="1"/>
</dbReference>
<dbReference type="PIRSF" id="PIRSF000116">
    <property type="entry name" value="IlvC_gammaproteo"/>
    <property type="match status" value="1"/>
</dbReference>
<dbReference type="SUPFAM" id="SSF48179">
    <property type="entry name" value="6-phosphogluconate dehydrogenase C-terminal domain-like"/>
    <property type="match status" value="1"/>
</dbReference>
<dbReference type="SUPFAM" id="SSF51735">
    <property type="entry name" value="NAD(P)-binding Rossmann-fold domains"/>
    <property type="match status" value="1"/>
</dbReference>
<dbReference type="PROSITE" id="PS51851">
    <property type="entry name" value="KARI_C"/>
    <property type="match status" value="1"/>
</dbReference>
<dbReference type="PROSITE" id="PS51850">
    <property type="entry name" value="KARI_N"/>
    <property type="match status" value="1"/>
</dbReference>
<comment type="function">
    <text evidence="1">Involved in the biosynthesis of branched-chain amino acids (BCAA). Catalyzes an alkyl-migration followed by a ketol-acid reduction of (S)-2-acetolactate (S2AL) to yield (R)-2,3-dihydroxy-isovalerate. In the isomerase reaction, S2AL is rearranged via a Mg-dependent methyl migration to produce 3-hydroxy-3-methyl-2-ketobutyrate (HMKB). In the reductase reaction, this 2-ketoacid undergoes a metal-dependent reduction by NADPH to yield (R)-2,3-dihydroxy-isovalerate.</text>
</comment>
<comment type="catalytic activity">
    <reaction evidence="1">
        <text>(2R)-2,3-dihydroxy-3-methylbutanoate + NADP(+) = (2S)-2-acetolactate + NADPH + H(+)</text>
        <dbReference type="Rhea" id="RHEA:22068"/>
        <dbReference type="ChEBI" id="CHEBI:15378"/>
        <dbReference type="ChEBI" id="CHEBI:49072"/>
        <dbReference type="ChEBI" id="CHEBI:57783"/>
        <dbReference type="ChEBI" id="CHEBI:58349"/>
        <dbReference type="ChEBI" id="CHEBI:58476"/>
        <dbReference type="EC" id="1.1.1.86"/>
    </reaction>
</comment>
<comment type="catalytic activity">
    <reaction evidence="1">
        <text>(2R,3R)-2,3-dihydroxy-3-methylpentanoate + NADP(+) = (S)-2-ethyl-2-hydroxy-3-oxobutanoate + NADPH + H(+)</text>
        <dbReference type="Rhea" id="RHEA:13493"/>
        <dbReference type="ChEBI" id="CHEBI:15378"/>
        <dbReference type="ChEBI" id="CHEBI:49256"/>
        <dbReference type="ChEBI" id="CHEBI:49258"/>
        <dbReference type="ChEBI" id="CHEBI:57783"/>
        <dbReference type="ChEBI" id="CHEBI:58349"/>
        <dbReference type="EC" id="1.1.1.86"/>
    </reaction>
</comment>
<comment type="cofactor">
    <cofactor evidence="1">
        <name>Mg(2+)</name>
        <dbReference type="ChEBI" id="CHEBI:18420"/>
    </cofactor>
    <text evidence="1">Binds 2 magnesium ions per subunit.</text>
</comment>
<comment type="pathway">
    <text evidence="1">Amino-acid biosynthesis; L-isoleucine biosynthesis; L-isoleucine from 2-oxobutanoate: step 2/4.</text>
</comment>
<comment type="pathway">
    <text evidence="1">Amino-acid biosynthesis; L-valine biosynthesis; L-valine from pyruvate: step 2/4.</text>
</comment>
<comment type="similarity">
    <text evidence="1">Belongs to the ketol-acid reductoisomerase family.</text>
</comment>
<feature type="chain" id="PRO_0000151324" description="Ketol-acid reductoisomerase (NADP(+))">
    <location>
        <begin position="1"/>
        <end position="331"/>
    </location>
</feature>
<feature type="domain" description="KARI N-terminal Rossmann" evidence="2">
    <location>
        <begin position="2"/>
        <end position="181"/>
    </location>
</feature>
<feature type="domain" description="KARI C-terminal knotted" evidence="3">
    <location>
        <begin position="182"/>
        <end position="327"/>
    </location>
</feature>
<feature type="active site" evidence="1">
    <location>
        <position position="107"/>
    </location>
</feature>
<feature type="binding site" evidence="1">
    <location>
        <begin position="25"/>
        <end position="28"/>
    </location>
    <ligand>
        <name>NADP(+)</name>
        <dbReference type="ChEBI" id="CHEBI:58349"/>
    </ligand>
</feature>
<feature type="binding site" evidence="1">
    <location>
        <position position="48"/>
    </location>
    <ligand>
        <name>NADP(+)</name>
        <dbReference type="ChEBI" id="CHEBI:58349"/>
    </ligand>
</feature>
<feature type="binding site" evidence="1">
    <location>
        <position position="52"/>
    </location>
    <ligand>
        <name>NADP(+)</name>
        <dbReference type="ChEBI" id="CHEBI:58349"/>
    </ligand>
</feature>
<feature type="binding site" evidence="1">
    <location>
        <begin position="82"/>
        <end position="85"/>
    </location>
    <ligand>
        <name>NADP(+)</name>
        <dbReference type="ChEBI" id="CHEBI:58349"/>
    </ligand>
</feature>
<feature type="binding site" evidence="1">
    <location>
        <position position="133"/>
    </location>
    <ligand>
        <name>NADP(+)</name>
        <dbReference type="ChEBI" id="CHEBI:58349"/>
    </ligand>
</feature>
<feature type="binding site" evidence="1">
    <location>
        <position position="190"/>
    </location>
    <ligand>
        <name>Mg(2+)</name>
        <dbReference type="ChEBI" id="CHEBI:18420"/>
        <label>1</label>
    </ligand>
</feature>
<feature type="binding site" evidence="1">
    <location>
        <position position="190"/>
    </location>
    <ligand>
        <name>Mg(2+)</name>
        <dbReference type="ChEBI" id="CHEBI:18420"/>
        <label>2</label>
    </ligand>
</feature>
<feature type="binding site" evidence="1">
    <location>
        <position position="194"/>
    </location>
    <ligand>
        <name>Mg(2+)</name>
        <dbReference type="ChEBI" id="CHEBI:18420"/>
        <label>1</label>
    </ligand>
</feature>
<feature type="binding site" evidence="1">
    <location>
        <position position="226"/>
    </location>
    <ligand>
        <name>Mg(2+)</name>
        <dbReference type="ChEBI" id="CHEBI:18420"/>
        <label>2</label>
    </ligand>
</feature>
<feature type="binding site" evidence="1">
    <location>
        <position position="230"/>
    </location>
    <ligand>
        <name>Mg(2+)</name>
        <dbReference type="ChEBI" id="CHEBI:18420"/>
        <label>2</label>
    </ligand>
</feature>
<feature type="binding site" evidence="1">
    <location>
        <position position="251"/>
    </location>
    <ligand>
        <name>substrate</name>
    </ligand>
</feature>
<evidence type="ECO:0000255" key="1">
    <source>
        <dbReference type="HAMAP-Rule" id="MF_00435"/>
    </source>
</evidence>
<evidence type="ECO:0000255" key="2">
    <source>
        <dbReference type="PROSITE-ProRule" id="PRU01197"/>
    </source>
</evidence>
<evidence type="ECO:0000255" key="3">
    <source>
        <dbReference type="PROSITE-ProRule" id="PRU01198"/>
    </source>
</evidence>
<name>ILVC_LISMF</name>
<accession>Q71Y36</accession>
<gene>
    <name evidence="1" type="primary">ilvC</name>
    <name type="ordered locus">LMOf2365_2009</name>
</gene>
<keyword id="KW-0028">Amino-acid biosynthesis</keyword>
<keyword id="KW-0100">Branched-chain amino acid biosynthesis</keyword>
<keyword id="KW-0460">Magnesium</keyword>
<keyword id="KW-0479">Metal-binding</keyword>
<keyword id="KW-0521">NADP</keyword>
<keyword id="KW-0560">Oxidoreductase</keyword>
<protein>
    <recommendedName>
        <fullName evidence="1">Ketol-acid reductoisomerase (NADP(+))</fullName>
        <shortName evidence="1">KARI</shortName>
        <ecNumber evidence="1">1.1.1.86</ecNumber>
    </recommendedName>
    <alternativeName>
        <fullName evidence="1">Acetohydroxy-acid isomeroreductase</fullName>
        <shortName evidence="1">AHIR</shortName>
    </alternativeName>
    <alternativeName>
        <fullName evidence="1">Alpha-keto-beta-hydroxylacyl reductoisomerase</fullName>
    </alternativeName>
    <alternativeName>
        <fullName evidence="1">Ketol-acid reductoisomerase type 1</fullName>
    </alternativeName>
    <alternativeName>
        <fullName evidence="1">Ketol-acid reductoisomerase type I</fullName>
    </alternativeName>
</protein>
<proteinExistence type="inferred from homology"/>
<organism>
    <name type="scientific">Listeria monocytogenes serotype 4b (strain F2365)</name>
    <dbReference type="NCBI Taxonomy" id="265669"/>
    <lineage>
        <taxon>Bacteria</taxon>
        <taxon>Bacillati</taxon>
        <taxon>Bacillota</taxon>
        <taxon>Bacilli</taxon>
        <taxon>Bacillales</taxon>
        <taxon>Listeriaceae</taxon>
        <taxon>Listeria</taxon>
    </lineage>
</organism>
<sequence>MTKVYYEDAVKNNALEGKTVAVIGYGSQGHAHSQNLRDNGNNVIIGIREGKSAESARNDGFDVYSVSEAAEKADVIMILLPDETQGETYENEIKPNLKAGNALVFAHGFNIHFDVINPPSDVDVFLVAPKGPGHLVRRTFVEGGAVPSLFAIYQDATGNARDTALSYAKGIGATRAGVIETTFKEETETDLFGEQAVLCGGATHLIQAGFETLVEAGYQPELAYFEVLHEMKLIVDLMYEGGMEKMRHSISNTAEYGDYVSGPRVVTADTKKAMKEVLTDIQNGNFAKSFIDDNKNGFKEFHRMRKEQQGHQIEKVGAELREMMPFVKPQH</sequence>
<reference key="1">
    <citation type="journal article" date="2004" name="Nucleic Acids Res.">
        <title>Whole genome comparisons of serotype 4b and 1/2a strains of the food-borne pathogen Listeria monocytogenes reveal new insights into the core genome components of this species.</title>
        <authorList>
            <person name="Nelson K.E."/>
            <person name="Fouts D.E."/>
            <person name="Mongodin E.F."/>
            <person name="Ravel J."/>
            <person name="DeBoy R.T."/>
            <person name="Kolonay J.F."/>
            <person name="Rasko D.A."/>
            <person name="Angiuoli S.V."/>
            <person name="Gill S.R."/>
            <person name="Paulsen I.T."/>
            <person name="Peterson J.D."/>
            <person name="White O."/>
            <person name="Nelson W.C."/>
            <person name="Nierman W.C."/>
            <person name="Beanan M.J."/>
            <person name="Brinkac L.M."/>
            <person name="Daugherty S.C."/>
            <person name="Dodson R.J."/>
            <person name="Durkin A.S."/>
            <person name="Madupu R."/>
            <person name="Haft D.H."/>
            <person name="Selengut J."/>
            <person name="Van Aken S.E."/>
            <person name="Khouri H.M."/>
            <person name="Fedorova N."/>
            <person name="Forberger H.A."/>
            <person name="Tran B."/>
            <person name="Kathariou S."/>
            <person name="Wonderling L.D."/>
            <person name="Uhlich G.A."/>
            <person name="Bayles D.O."/>
            <person name="Luchansky J.B."/>
            <person name="Fraser C.M."/>
        </authorList>
    </citation>
    <scope>NUCLEOTIDE SEQUENCE [LARGE SCALE GENOMIC DNA]</scope>
    <source>
        <strain>F2365</strain>
    </source>
</reference>